<keyword id="KW-0002">3D-structure</keyword>
<keyword id="KW-0004">4Fe-4S</keyword>
<keyword id="KW-0963">Cytoplasm</keyword>
<keyword id="KW-0408">Iron</keyword>
<keyword id="KW-0411">Iron-sulfur</keyword>
<keyword id="KW-0479">Metal-binding</keyword>
<keyword id="KW-0560">Oxidoreductase</keyword>
<keyword id="KW-0671">Queuosine biosynthesis</keyword>
<keyword id="KW-1185">Reference proteome</keyword>
<keyword id="KW-0819">tRNA processing</keyword>
<organism>
    <name type="scientific">Bacillus subtilis (strain 168)</name>
    <dbReference type="NCBI Taxonomy" id="224308"/>
    <lineage>
        <taxon>Bacteria</taxon>
        <taxon>Bacillati</taxon>
        <taxon>Bacillota</taxon>
        <taxon>Bacilli</taxon>
        <taxon>Bacillales</taxon>
        <taxon>Bacillaceae</taxon>
        <taxon>Bacillus</taxon>
    </lineage>
</organism>
<comment type="function">
    <text evidence="1 2 3">Catalyzes the conversion of epoxyqueuosine (oQ) to queuosine (Q), which is a hypermodified base found in the wobble positions of tRNA(Asp), tRNA(Asn), tRNA(His) and tRNA(Tyr).</text>
</comment>
<comment type="catalytic activity">
    <reaction evidence="1 2 3">
        <text>epoxyqueuosine(34) in tRNA + AH2 = queuosine(34) in tRNA + A + H2O</text>
        <dbReference type="Rhea" id="RHEA:32159"/>
        <dbReference type="Rhea" id="RHEA-COMP:18571"/>
        <dbReference type="Rhea" id="RHEA-COMP:18582"/>
        <dbReference type="ChEBI" id="CHEBI:13193"/>
        <dbReference type="ChEBI" id="CHEBI:15377"/>
        <dbReference type="ChEBI" id="CHEBI:17499"/>
        <dbReference type="ChEBI" id="CHEBI:194431"/>
        <dbReference type="ChEBI" id="CHEBI:194443"/>
        <dbReference type="EC" id="1.17.99.6"/>
    </reaction>
</comment>
<comment type="cofactor">
    <cofactor evidence="3 4">
        <name>cob(II)alamin</name>
        <dbReference type="ChEBI" id="CHEBI:16304"/>
    </cofactor>
</comment>
<comment type="cofactor">
    <cofactor evidence="3 4">
        <name>[4Fe-4S] cluster</name>
        <dbReference type="ChEBI" id="CHEBI:49883"/>
    </cofactor>
    <text evidence="3 4">Binds 2 [4Fe-4S] clusters per monomer.</text>
</comment>
<comment type="pathway">
    <text evidence="1 2">tRNA modification; tRNA-queuosine biosynthesis.</text>
</comment>
<comment type="subunit">
    <text evidence="3">Monomer.</text>
</comment>
<comment type="subcellular location">
    <subcellularLocation>
        <location evidence="7">Cytoplasm</location>
    </subcellularLocation>
</comment>
<comment type="similarity">
    <text evidence="1">Belongs to the QueG family.</text>
</comment>
<comment type="sequence caution" evidence="6">
    <conflict type="erroneous initiation">
        <sequence resource="EMBL-CDS" id="CAB07527"/>
    </conflict>
    <text>Extended N-terminus.</text>
</comment>
<proteinExistence type="evidence at protein level"/>
<evidence type="ECO:0000255" key="1">
    <source>
        <dbReference type="HAMAP-Rule" id="MF_00916"/>
    </source>
</evidence>
<evidence type="ECO:0000269" key="2">
    <source>
    </source>
</evidence>
<evidence type="ECO:0000269" key="3">
    <source>
    </source>
</evidence>
<evidence type="ECO:0000269" key="4">
    <source>
    </source>
</evidence>
<evidence type="ECO:0000303" key="5">
    <source>
    </source>
</evidence>
<evidence type="ECO:0000305" key="6"/>
<evidence type="ECO:0000305" key="7">
    <source>
    </source>
</evidence>
<evidence type="ECO:0000305" key="8">
    <source>
    </source>
</evidence>
<evidence type="ECO:0007744" key="9">
    <source>
        <dbReference type="PDB" id="5D08"/>
    </source>
</evidence>
<evidence type="ECO:0007744" key="10">
    <source>
        <dbReference type="PDB" id="5D0A"/>
    </source>
</evidence>
<evidence type="ECO:0007744" key="11">
    <source>
        <dbReference type="PDB" id="5D0B"/>
    </source>
</evidence>
<evidence type="ECO:0007744" key="12">
    <source>
        <dbReference type="PDB" id="5T8Y"/>
    </source>
</evidence>
<evidence type="ECO:0007829" key="13">
    <source>
        <dbReference type="PDB" id="5D08"/>
    </source>
</evidence>
<accession>P97030</accession>
<accession>Q796Y4</accession>
<feature type="chain" id="PRO_0000360648" description="Epoxyqueuosine reductase">
    <location>
        <begin position="1"/>
        <end position="386"/>
    </location>
</feature>
<feature type="domain" description="4Fe-4S ferredoxin-type" evidence="1">
    <location>
        <begin position="178"/>
        <end position="208"/>
    </location>
</feature>
<feature type="repeat" description="HEAT-like PBS-type">
    <location>
        <begin position="333"/>
        <end position="357"/>
    </location>
</feature>
<feature type="active site" description="Proton donor" evidence="8">
    <location>
        <position position="134"/>
    </location>
</feature>
<feature type="binding site" evidence="4 11">
    <location>
        <position position="57"/>
    </location>
    <ligand>
        <name>cob(II)alamin</name>
        <dbReference type="ChEBI" id="CHEBI:16304"/>
    </ligand>
</feature>
<feature type="binding site" evidence="4 11">
    <location>
        <position position="97"/>
    </location>
    <ligand>
        <name>cob(II)alamin</name>
        <dbReference type="ChEBI" id="CHEBI:16304"/>
    </ligand>
</feature>
<feature type="binding site" evidence="4 11">
    <location>
        <position position="134"/>
    </location>
    <ligand>
        <name>cob(II)alamin</name>
        <dbReference type="ChEBI" id="CHEBI:16304"/>
    </ligand>
</feature>
<feature type="binding site" evidence="4 11">
    <location>
        <begin position="139"/>
        <end position="141"/>
    </location>
    <ligand>
        <name>cob(II)alamin</name>
        <dbReference type="ChEBI" id="CHEBI:16304"/>
    </ligand>
</feature>
<feature type="binding site" evidence="4 11">
    <location>
        <position position="152"/>
    </location>
    <ligand>
        <name>cob(II)alamin</name>
        <dbReference type="ChEBI" id="CHEBI:16304"/>
    </ligand>
</feature>
<feature type="binding site" evidence="4 11">
    <location>
        <position position="155"/>
    </location>
    <ligand>
        <name>cob(II)alamin</name>
        <dbReference type="ChEBI" id="CHEBI:16304"/>
    </ligand>
</feature>
<feature type="binding site" evidence="4 11">
    <location>
        <position position="158"/>
    </location>
    <ligand>
        <name>cob(II)alamin</name>
        <dbReference type="ChEBI" id="CHEBI:16304"/>
    </ligand>
</feature>
<feature type="binding site" evidence="4 11">
    <location>
        <position position="169"/>
    </location>
    <ligand>
        <name>cob(II)alamin</name>
        <dbReference type="ChEBI" id="CHEBI:16304"/>
    </ligand>
</feature>
<feature type="binding site" evidence="4 11">
    <location>
        <position position="188"/>
    </location>
    <ligand>
        <name>[4Fe-4S] cluster</name>
        <dbReference type="ChEBI" id="CHEBI:49883"/>
        <label>1</label>
    </ligand>
</feature>
<feature type="binding site" evidence="4 11">
    <location>
        <position position="191"/>
    </location>
    <ligand>
        <name>[4Fe-4S] cluster</name>
        <dbReference type="ChEBI" id="CHEBI:49883"/>
        <label>1</label>
    </ligand>
</feature>
<feature type="binding site" evidence="4 11">
    <location>
        <position position="194"/>
    </location>
    <ligand>
        <name>[4Fe-4S] cluster</name>
        <dbReference type="ChEBI" id="CHEBI:49883"/>
        <label>1</label>
    </ligand>
</feature>
<feature type="binding site" evidence="4 11">
    <location>
        <position position="198"/>
    </location>
    <ligand>
        <name>[4Fe-4S] cluster</name>
        <dbReference type="ChEBI" id="CHEBI:49883"/>
        <label>2</label>
    </ligand>
</feature>
<feature type="binding site" evidence="4 11">
    <location>
        <position position="214"/>
    </location>
    <ligand>
        <name>[4Fe-4S] cluster</name>
        <dbReference type="ChEBI" id="CHEBI:49883"/>
        <label>2</label>
    </ligand>
</feature>
<feature type="binding site" evidence="4 11">
    <location>
        <position position="216"/>
    </location>
    <ligand>
        <name>cob(II)alamin</name>
        <dbReference type="ChEBI" id="CHEBI:16304"/>
    </ligand>
</feature>
<feature type="binding site" evidence="4">
    <location>
        <position position="220"/>
    </location>
    <ligand>
        <name>tRNA</name>
        <dbReference type="ChEBI" id="CHEBI:17843"/>
    </ligand>
    <ligandPart>
        <name>tRNA anticodon stem loop</name>
    </ligandPart>
</feature>
<feature type="binding site" evidence="4">
    <location>
        <position position="222"/>
    </location>
    <ligand>
        <name>tRNA</name>
        <dbReference type="ChEBI" id="CHEBI:17843"/>
    </ligand>
    <ligandPart>
        <name>tRNA anticodon stem loop</name>
    </ligandPart>
</feature>
<feature type="binding site" evidence="4 11">
    <location>
        <begin position="240"/>
        <end position="241"/>
    </location>
    <ligand>
        <name>cob(II)alamin</name>
        <dbReference type="ChEBI" id="CHEBI:16304"/>
    </ligand>
</feature>
<feature type="binding site" evidence="4 11">
    <location>
        <position position="240"/>
    </location>
    <ligand>
        <name>[4Fe-4S] cluster</name>
        <dbReference type="ChEBI" id="CHEBI:49883"/>
        <label>2</label>
    </ligand>
</feature>
<feature type="binding site" evidence="4 11">
    <location>
        <position position="243"/>
    </location>
    <ligand>
        <name>[4Fe-4S] cluster</name>
        <dbReference type="ChEBI" id="CHEBI:49883"/>
        <label>2</label>
    </ligand>
</feature>
<feature type="binding site" evidence="4 11">
    <location>
        <position position="247"/>
    </location>
    <ligand>
        <name>[4Fe-4S] cluster</name>
        <dbReference type="ChEBI" id="CHEBI:49883"/>
        <label>1</label>
    </ligand>
</feature>
<feature type="binding site" evidence="4">
    <location>
        <position position="280"/>
    </location>
    <ligand>
        <name>tRNA</name>
        <dbReference type="ChEBI" id="CHEBI:17843"/>
    </ligand>
    <ligandPart>
        <name>tRNA anticodon stem loop</name>
    </ligandPart>
</feature>
<feature type="binding site" evidence="4">
    <location>
        <position position="281"/>
    </location>
    <ligand>
        <name>tRNA</name>
        <dbReference type="ChEBI" id="CHEBI:17843"/>
    </ligand>
    <ligandPart>
        <name>tRNA anticodon stem loop</name>
    </ligandPart>
</feature>
<feature type="binding site" evidence="4">
    <location>
        <position position="295"/>
    </location>
    <ligand>
        <name>tRNA</name>
        <dbReference type="ChEBI" id="CHEBI:17843"/>
    </ligand>
    <ligandPart>
        <name>tRNA anticodon stem loop</name>
    </ligandPart>
</feature>
<feature type="binding site" evidence="4">
    <location>
        <position position="297"/>
    </location>
    <ligand>
        <name>tRNA</name>
        <dbReference type="ChEBI" id="CHEBI:17843"/>
    </ligand>
    <ligandPart>
        <name>tRNA anticodon stem loop</name>
    </ligandPart>
</feature>
<feature type="binding site" evidence="4">
    <location>
        <position position="298"/>
    </location>
    <ligand>
        <name>tRNA</name>
        <dbReference type="ChEBI" id="CHEBI:17843"/>
    </ligand>
    <ligandPart>
        <name>tRNA anticodon stem loop</name>
    </ligandPart>
</feature>
<feature type="helix" evidence="13">
    <location>
        <begin position="3"/>
        <end position="16"/>
    </location>
</feature>
<feature type="strand" evidence="13">
    <location>
        <begin position="20"/>
        <end position="26"/>
    </location>
</feature>
<feature type="helix" evidence="13">
    <location>
        <begin position="31"/>
        <end position="43"/>
    </location>
</feature>
<feature type="helix" evidence="13">
    <location>
        <begin position="54"/>
        <end position="58"/>
    </location>
</feature>
<feature type="helix" evidence="13">
    <location>
        <begin position="60"/>
        <end position="63"/>
    </location>
</feature>
<feature type="strand" evidence="13">
    <location>
        <begin position="69"/>
        <end position="76"/>
    </location>
</feature>
<feature type="strand" evidence="13">
    <location>
        <begin position="89"/>
        <end position="91"/>
    </location>
</feature>
<feature type="helix" evidence="13">
    <location>
        <begin position="98"/>
        <end position="100"/>
    </location>
</feature>
<feature type="strand" evidence="13">
    <location>
        <begin position="101"/>
        <end position="103"/>
    </location>
</feature>
<feature type="helix" evidence="13">
    <location>
        <begin position="105"/>
        <end position="121"/>
    </location>
</feature>
<feature type="strand" evidence="13">
    <location>
        <begin position="129"/>
        <end position="138"/>
    </location>
</feature>
<feature type="helix" evidence="13">
    <location>
        <begin position="140"/>
        <end position="146"/>
    </location>
</feature>
<feature type="strand" evidence="13">
    <location>
        <begin position="158"/>
        <end position="160"/>
    </location>
</feature>
<feature type="turn" evidence="13">
    <location>
        <begin position="161"/>
        <end position="163"/>
    </location>
</feature>
<feature type="strand" evidence="13">
    <location>
        <begin position="167"/>
        <end position="175"/>
    </location>
</feature>
<feature type="helix" evidence="13">
    <location>
        <begin position="193"/>
        <end position="197"/>
    </location>
</feature>
<feature type="strand" evidence="13">
    <location>
        <begin position="203"/>
        <end position="205"/>
    </location>
</feature>
<feature type="helix" evidence="13">
    <location>
        <begin position="211"/>
        <end position="213"/>
    </location>
</feature>
<feature type="helix" evidence="13">
    <location>
        <begin position="215"/>
        <end position="219"/>
    </location>
</feature>
<feature type="helix" evidence="13">
    <location>
        <begin position="227"/>
        <end position="230"/>
    </location>
</feature>
<feature type="strand" evidence="13">
    <location>
        <begin position="236"/>
        <end position="238"/>
    </location>
</feature>
<feature type="helix" evidence="13">
    <location>
        <begin position="242"/>
        <end position="245"/>
    </location>
</feature>
<feature type="helix" evidence="13">
    <location>
        <begin position="248"/>
        <end position="250"/>
    </location>
</feature>
<feature type="helix" evidence="13">
    <location>
        <begin position="259"/>
        <end position="261"/>
    </location>
</feature>
<feature type="helix" evidence="13">
    <location>
        <begin position="265"/>
        <end position="268"/>
    </location>
</feature>
<feature type="helix" evidence="13">
    <location>
        <begin position="272"/>
        <end position="275"/>
    </location>
</feature>
<feature type="helix" evidence="13">
    <location>
        <begin position="280"/>
        <end position="287"/>
    </location>
</feature>
<feature type="helix" evidence="13">
    <location>
        <begin position="291"/>
        <end position="293"/>
    </location>
</feature>
<feature type="helix" evidence="13">
    <location>
        <begin position="298"/>
        <end position="310"/>
    </location>
</feature>
<feature type="helix" evidence="13">
    <location>
        <begin position="314"/>
        <end position="316"/>
    </location>
</feature>
<feature type="helix" evidence="13">
    <location>
        <begin position="317"/>
        <end position="326"/>
    </location>
</feature>
<feature type="helix" evidence="13">
    <location>
        <begin position="330"/>
        <end position="343"/>
    </location>
</feature>
<feature type="helix" evidence="13">
    <location>
        <begin position="346"/>
        <end position="348"/>
    </location>
</feature>
<feature type="helix" evidence="13">
    <location>
        <begin position="349"/>
        <end position="356"/>
    </location>
</feature>
<feature type="helix" evidence="13">
    <location>
        <begin position="362"/>
        <end position="382"/>
    </location>
</feature>
<sequence length="386" mass="43142">MNVYQLKEELIEYAKSIGVDKIGFTTADTFDSLKDRLILQESLGYLSGFEEPDIEKRVTPKLLLPKAKSIVAIALAYPSRMKDAPRSTRTERRGIFCRASWGKDYHDVLREKLDLLEDFLKSKHEDIRTKSMVDTGELSDRAVAERAGIGFSAKNCMITTPEYGSYVYLAEMITNIPFEPDVPIEDMCGSCTKCLDACPTGALVNPGQLNAQRCISFLTQTKGFLPDEFRTKIGNRLYGCDTCQTVCPLNKGKDFHLHPEMEPDPEIAKPLLKPLLAISNREFKEKFGHVSGSWRGKKPIQRNAILALAHFKDASALPELTELMHKDPRPVIRGTAAWAIGKIGDPAYAEELEKALEKEKDEEAKLEIEKGIELLKASGMTKQGLS</sequence>
<reference key="1">
    <citation type="submission" date="1997-03" db="EMBL/GenBank/DDBJ databases">
        <authorList>
            <person name="Cummings N.J."/>
            <person name="Ruiz-Teran F."/>
            <person name="Connerton I.F."/>
        </authorList>
    </citation>
    <scope>NUCLEOTIDE SEQUENCE [GENOMIC DNA]</scope>
    <source>
        <strain>168</strain>
    </source>
</reference>
<reference key="2">
    <citation type="journal article" date="1997" name="Nature">
        <title>The complete genome sequence of the Gram-positive bacterium Bacillus subtilis.</title>
        <authorList>
            <person name="Kunst F."/>
            <person name="Ogasawara N."/>
            <person name="Moszer I."/>
            <person name="Albertini A.M."/>
            <person name="Alloni G."/>
            <person name="Azevedo V."/>
            <person name="Bertero M.G."/>
            <person name="Bessieres P."/>
            <person name="Bolotin A."/>
            <person name="Borchert S."/>
            <person name="Borriss R."/>
            <person name="Boursier L."/>
            <person name="Brans A."/>
            <person name="Braun M."/>
            <person name="Brignell S.C."/>
            <person name="Bron S."/>
            <person name="Brouillet S."/>
            <person name="Bruschi C.V."/>
            <person name="Caldwell B."/>
            <person name="Capuano V."/>
            <person name="Carter N.M."/>
            <person name="Choi S.-K."/>
            <person name="Codani J.-J."/>
            <person name="Connerton I.F."/>
            <person name="Cummings N.J."/>
            <person name="Daniel R.A."/>
            <person name="Denizot F."/>
            <person name="Devine K.M."/>
            <person name="Duesterhoeft A."/>
            <person name="Ehrlich S.D."/>
            <person name="Emmerson P.T."/>
            <person name="Entian K.-D."/>
            <person name="Errington J."/>
            <person name="Fabret C."/>
            <person name="Ferrari E."/>
            <person name="Foulger D."/>
            <person name="Fritz C."/>
            <person name="Fujita M."/>
            <person name="Fujita Y."/>
            <person name="Fuma S."/>
            <person name="Galizzi A."/>
            <person name="Galleron N."/>
            <person name="Ghim S.-Y."/>
            <person name="Glaser P."/>
            <person name="Goffeau A."/>
            <person name="Golightly E.J."/>
            <person name="Grandi G."/>
            <person name="Guiseppi G."/>
            <person name="Guy B.J."/>
            <person name="Haga K."/>
            <person name="Haiech J."/>
            <person name="Harwood C.R."/>
            <person name="Henaut A."/>
            <person name="Hilbert H."/>
            <person name="Holsappel S."/>
            <person name="Hosono S."/>
            <person name="Hullo M.-F."/>
            <person name="Itaya M."/>
            <person name="Jones L.-M."/>
            <person name="Joris B."/>
            <person name="Karamata D."/>
            <person name="Kasahara Y."/>
            <person name="Klaerr-Blanchard M."/>
            <person name="Klein C."/>
            <person name="Kobayashi Y."/>
            <person name="Koetter P."/>
            <person name="Koningstein G."/>
            <person name="Krogh S."/>
            <person name="Kumano M."/>
            <person name="Kurita K."/>
            <person name="Lapidus A."/>
            <person name="Lardinois S."/>
            <person name="Lauber J."/>
            <person name="Lazarevic V."/>
            <person name="Lee S.-M."/>
            <person name="Levine A."/>
            <person name="Liu H."/>
            <person name="Masuda S."/>
            <person name="Mauel C."/>
            <person name="Medigue C."/>
            <person name="Medina N."/>
            <person name="Mellado R.P."/>
            <person name="Mizuno M."/>
            <person name="Moestl D."/>
            <person name="Nakai S."/>
            <person name="Noback M."/>
            <person name="Noone D."/>
            <person name="O'Reilly M."/>
            <person name="Ogawa K."/>
            <person name="Ogiwara A."/>
            <person name="Oudega B."/>
            <person name="Park S.-H."/>
            <person name="Parro V."/>
            <person name="Pohl T.M."/>
            <person name="Portetelle D."/>
            <person name="Porwollik S."/>
            <person name="Prescott A.M."/>
            <person name="Presecan E."/>
            <person name="Pujic P."/>
            <person name="Purnelle B."/>
            <person name="Rapoport G."/>
            <person name="Rey M."/>
            <person name="Reynolds S."/>
            <person name="Rieger M."/>
            <person name="Rivolta C."/>
            <person name="Rocha E."/>
            <person name="Roche B."/>
            <person name="Rose M."/>
            <person name="Sadaie Y."/>
            <person name="Sato T."/>
            <person name="Scanlan E."/>
            <person name="Schleich S."/>
            <person name="Schroeter R."/>
            <person name="Scoffone F."/>
            <person name="Sekiguchi J."/>
            <person name="Sekowska A."/>
            <person name="Seror S.J."/>
            <person name="Serror P."/>
            <person name="Shin B.-S."/>
            <person name="Soldo B."/>
            <person name="Sorokin A."/>
            <person name="Tacconi E."/>
            <person name="Takagi T."/>
            <person name="Takahashi H."/>
            <person name="Takemaru K."/>
            <person name="Takeuchi M."/>
            <person name="Tamakoshi A."/>
            <person name="Tanaka T."/>
            <person name="Terpstra P."/>
            <person name="Tognoni A."/>
            <person name="Tosato V."/>
            <person name="Uchiyama S."/>
            <person name="Vandenbol M."/>
            <person name="Vannier F."/>
            <person name="Vassarotti A."/>
            <person name="Viari A."/>
            <person name="Wambutt R."/>
            <person name="Wedler E."/>
            <person name="Wedler H."/>
            <person name="Weitzenegger T."/>
            <person name="Winters P."/>
            <person name="Wipat A."/>
            <person name="Yamamoto H."/>
            <person name="Yamane K."/>
            <person name="Yasumoto K."/>
            <person name="Yata K."/>
            <person name="Yoshida K."/>
            <person name="Yoshikawa H.-F."/>
            <person name="Zumstein E."/>
            <person name="Yoshikawa H."/>
            <person name="Danchin A."/>
        </authorList>
    </citation>
    <scope>NUCLEOTIDE SEQUENCE [LARGE SCALE GENOMIC DNA]</scope>
    <source>
        <strain>168</strain>
    </source>
</reference>
<reference key="3">
    <citation type="journal article" date="2011" name="Proc. Natl. Acad. Sci. U.S.A.">
        <title>Discovery of epoxyqueuosine (oQ) reductase reveals parallels between halorespiration and tRNA modification.</title>
        <authorList>
            <person name="Miles Z.D."/>
            <person name="McCarty R.M."/>
            <person name="Molnar G."/>
            <person name="Bandarian V."/>
        </authorList>
    </citation>
    <scope>FUNCTION AS A REDUCTASE</scope>
    <scope>CATALYTIC ACTIVITY</scope>
    <scope>ACTIVITY REGULATION</scope>
    <scope>PATHWAY</scope>
    <scope>SUBCELLULAR LOCATION</scope>
    <scope>GENE NAME</scope>
</reference>
<reference key="4">
    <citation type="journal article" date="2015" name="Biochemistry">
        <title>Biochemical and Spectroscopic Studies of Epoxyqueuosine Reductase: A Novel Iron-Sulfur Cluster- and Cobalamin-Containing Protein Involved in the Biosynthesis of Queuosine.</title>
        <authorList>
            <person name="Miles Z.D."/>
            <person name="Myers W.K."/>
            <person name="Kincannon W.M."/>
            <person name="Britt R.D."/>
            <person name="Bandarian V."/>
        </authorList>
    </citation>
    <scope>FUNCTION</scope>
    <scope>CATALYTIC ACTIVITY</scope>
    <scope>COFACTOR</scope>
    <scope>SUBUNIT</scope>
</reference>
<reference evidence="9 10 11 12" key="5">
    <citation type="journal article" date="2016" name="Nucleic Acids Res.">
        <title>Molecular basis of cobalamin-dependent RNA modification.</title>
        <authorList>
            <person name="Dowling D.P."/>
            <person name="Miles Z.D."/>
            <person name="Kohrer C."/>
            <person name="Maiocco S.J."/>
            <person name="Elliott S.J."/>
            <person name="Bandarian V."/>
            <person name="Drennan C.L."/>
        </authorList>
    </citation>
    <scope>X-RAY CRYSTALLOGRAPHY (1.75 ANGSTROMS) OF 2-386 IN COMPLEXES WITH IRON-SULFUR (4FE-4S) CLUSTERS; COBALAMIN AND TRNA</scope>
    <scope>COFACTOR</scope>
    <scope>REACTION MECHANISM</scope>
    <scope>ACTIVE SITE</scope>
</reference>
<dbReference type="EC" id="1.17.99.6" evidence="1 2"/>
<dbReference type="EMBL" id="Z93102">
    <property type="protein sequence ID" value="CAB07527.1"/>
    <property type="status" value="ALT_INIT"/>
    <property type="molecule type" value="Genomic_DNA"/>
</dbReference>
<dbReference type="EMBL" id="AL009126">
    <property type="protein sequence ID" value="CAB12719.2"/>
    <property type="molecule type" value="Genomic_DNA"/>
</dbReference>
<dbReference type="PIR" id="E69820">
    <property type="entry name" value="E69820"/>
</dbReference>
<dbReference type="RefSeq" id="NP_388772.2">
    <property type="nucleotide sequence ID" value="NC_000964.3"/>
</dbReference>
<dbReference type="RefSeq" id="WP_003245522.1">
    <property type="nucleotide sequence ID" value="NZ_OZ025638.1"/>
</dbReference>
<dbReference type="PDB" id="5D08">
    <property type="method" value="X-ray"/>
    <property type="resolution" value="1.75 A"/>
    <property type="chains" value="A/B=2-386"/>
</dbReference>
<dbReference type="PDB" id="5D0A">
    <property type="method" value="X-ray"/>
    <property type="resolution" value="2.10 A"/>
    <property type="chains" value="A/B/C/D=1-386"/>
</dbReference>
<dbReference type="PDB" id="5D0B">
    <property type="method" value="X-ray"/>
    <property type="resolution" value="2.65 A"/>
    <property type="chains" value="A/B=1-386"/>
</dbReference>
<dbReference type="PDB" id="5T8Y">
    <property type="method" value="X-ray"/>
    <property type="resolution" value="2.65 A"/>
    <property type="chains" value="A/B=1-386"/>
</dbReference>
<dbReference type="PDBsum" id="5D08"/>
<dbReference type="PDBsum" id="5D0A"/>
<dbReference type="PDBsum" id="5D0B"/>
<dbReference type="PDBsum" id="5T8Y"/>
<dbReference type="SMR" id="P97030"/>
<dbReference type="FunCoup" id="P97030">
    <property type="interactions" value="234"/>
</dbReference>
<dbReference type="STRING" id="224308.BSU08910"/>
<dbReference type="PaxDb" id="224308-BSU08910"/>
<dbReference type="DNASU" id="939243"/>
<dbReference type="EnsemblBacteria" id="CAB12719">
    <property type="protein sequence ID" value="CAB12719"/>
    <property type="gene ID" value="BSU_08910"/>
</dbReference>
<dbReference type="GeneID" id="939243"/>
<dbReference type="KEGG" id="bsu:BSU08910"/>
<dbReference type="PATRIC" id="fig|224308.179.peg.962"/>
<dbReference type="eggNOG" id="COG1600">
    <property type="taxonomic scope" value="Bacteria"/>
</dbReference>
<dbReference type="InParanoid" id="P97030"/>
<dbReference type="OrthoDB" id="9784571at2"/>
<dbReference type="PhylomeDB" id="P97030"/>
<dbReference type="BioCyc" id="BSUB:BSU08910-MONOMER"/>
<dbReference type="BRENDA" id="1.17.99.6">
    <property type="organism ID" value="658"/>
</dbReference>
<dbReference type="UniPathway" id="UPA00392"/>
<dbReference type="Proteomes" id="UP000001570">
    <property type="component" value="Chromosome"/>
</dbReference>
<dbReference type="GO" id="GO:0005737">
    <property type="term" value="C:cytoplasm"/>
    <property type="evidence" value="ECO:0007669"/>
    <property type="project" value="UniProtKB-SubCell"/>
</dbReference>
<dbReference type="GO" id="GO:0051539">
    <property type="term" value="F:4 iron, 4 sulfur cluster binding"/>
    <property type="evidence" value="ECO:0007669"/>
    <property type="project" value="UniProtKB-KW"/>
</dbReference>
<dbReference type="GO" id="GO:0052693">
    <property type="term" value="F:epoxyqueuosine reductase activity"/>
    <property type="evidence" value="ECO:0000318"/>
    <property type="project" value="GO_Central"/>
</dbReference>
<dbReference type="GO" id="GO:0046872">
    <property type="term" value="F:metal ion binding"/>
    <property type="evidence" value="ECO:0007669"/>
    <property type="project" value="UniProtKB-KW"/>
</dbReference>
<dbReference type="GO" id="GO:0008616">
    <property type="term" value="P:queuosine biosynthetic process"/>
    <property type="evidence" value="ECO:0000318"/>
    <property type="project" value="GO_Central"/>
</dbReference>
<dbReference type="GO" id="GO:0006400">
    <property type="term" value="P:tRNA modification"/>
    <property type="evidence" value="ECO:0007669"/>
    <property type="project" value="UniProtKB-UniRule"/>
</dbReference>
<dbReference type="FunFam" id="3.30.70.20:FF:000037">
    <property type="entry name" value="Epoxyqueuosine reductase"/>
    <property type="match status" value="1"/>
</dbReference>
<dbReference type="Gene3D" id="3.30.70.20">
    <property type="match status" value="1"/>
</dbReference>
<dbReference type="Gene3D" id="1.25.10.10">
    <property type="entry name" value="Leucine-rich Repeat Variant"/>
    <property type="match status" value="1"/>
</dbReference>
<dbReference type="HAMAP" id="MF_00916">
    <property type="entry name" value="QueG"/>
    <property type="match status" value="1"/>
</dbReference>
<dbReference type="InterPro" id="IPR017896">
    <property type="entry name" value="4Fe4S_Fe-S-bd"/>
</dbReference>
<dbReference type="InterPro" id="IPR017900">
    <property type="entry name" value="4Fe4S_Fe_S_CS"/>
</dbReference>
<dbReference type="InterPro" id="IPR011989">
    <property type="entry name" value="ARM-like"/>
</dbReference>
<dbReference type="InterPro" id="IPR016024">
    <property type="entry name" value="ARM-type_fold"/>
</dbReference>
<dbReference type="InterPro" id="IPR004155">
    <property type="entry name" value="PBS_lyase_HEAT"/>
</dbReference>
<dbReference type="InterPro" id="IPR004453">
    <property type="entry name" value="QueG"/>
</dbReference>
<dbReference type="InterPro" id="IPR013542">
    <property type="entry name" value="QueG_DUF1730"/>
</dbReference>
<dbReference type="NCBIfam" id="TIGR00276">
    <property type="entry name" value="tRNA epoxyqueuosine(34) reductase QueG"/>
    <property type="match status" value="1"/>
</dbReference>
<dbReference type="PANTHER" id="PTHR30002">
    <property type="entry name" value="EPOXYQUEUOSINE REDUCTASE"/>
    <property type="match status" value="1"/>
</dbReference>
<dbReference type="PANTHER" id="PTHR30002:SF4">
    <property type="entry name" value="EPOXYQUEUOSINE REDUCTASE"/>
    <property type="match status" value="1"/>
</dbReference>
<dbReference type="Pfam" id="PF13484">
    <property type="entry name" value="Fer4_16"/>
    <property type="match status" value="1"/>
</dbReference>
<dbReference type="Pfam" id="PF13646">
    <property type="entry name" value="HEAT_2"/>
    <property type="match status" value="1"/>
</dbReference>
<dbReference type="Pfam" id="PF08331">
    <property type="entry name" value="QueG_DUF1730"/>
    <property type="match status" value="1"/>
</dbReference>
<dbReference type="SMART" id="SM00567">
    <property type="entry name" value="EZ_HEAT"/>
    <property type="match status" value="2"/>
</dbReference>
<dbReference type="SUPFAM" id="SSF54862">
    <property type="entry name" value="4Fe-4S ferredoxins"/>
    <property type="match status" value="1"/>
</dbReference>
<dbReference type="SUPFAM" id="SSF48371">
    <property type="entry name" value="ARM repeat"/>
    <property type="match status" value="1"/>
</dbReference>
<dbReference type="PROSITE" id="PS00198">
    <property type="entry name" value="4FE4S_FER_1"/>
    <property type="match status" value="1"/>
</dbReference>
<dbReference type="PROSITE" id="PS51379">
    <property type="entry name" value="4FE4S_FER_2"/>
    <property type="match status" value="1"/>
</dbReference>
<gene>
    <name evidence="1 5" type="primary">queG</name>
    <name type="synonym">ygaP</name>
    <name type="synonym">yhbA</name>
    <name type="ordered locus">BSU08910</name>
</gene>
<protein>
    <recommendedName>
        <fullName evidence="1 5">Epoxyqueuosine reductase</fullName>
        <ecNumber evidence="1 2">1.17.99.6</ecNumber>
    </recommendedName>
    <alternativeName>
        <fullName evidence="1">Queuosine biosynthesis protein QueG</fullName>
    </alternativeName>
</protein>
<name>QUEG_BACSU</name>